<organism>
    <name type="scientific">Saccharomyces cerevisiae (strain ATCC 204508 / S288c)</name>
    <name type="common">Baker's yeast</name>
    <dbReference type="NCBI Taxonomy" id="559292"/>
    <lineage>
        <taxon>Eukaryota</taxon>
        <taxon>Fungi</taxon>
        <taxon>Dikarya</taxon>
        <taxon>Ascomycota</taxon>
        <taxon>Saccharomycotina</taxon>
        <taxon>Saccharomycetes</taxon>
        <taxon>Saccharomycetales</taxon>
        <taxon>Saccharomycetaceae</taxon>
        <taxon>Saccharomyces</taxon>
    </lineage>
</organism>
<evidence type="ECO:0000305" key="1">
    <source>
    </source>
</evidence>
<dbReference type="EMBL" id="X90565">
    <property type="protein sequence ID" value="CAA62173.1"/>
    <property type="molecule type" value="Genomic_DNA"/>
</dbReference>
<dbReference type="EMBL" id="Z75226">
    <property type="protein sequence ID" value="CAA99638.1"/>
    <property type="molecule type" value="Genomic_DNA"/>
</dbReference>
<dbReference type="PIR" id="S59849">
    <property type="entry name" value="S59849"/>
</dbReference>
<dbReference type="DIP" id="DIP-5391N"/>
<dbReference type="IntAct" id="Q99318">
    <property type="interactions" value="1"/>
</dbReference>
<dbReference type="STRING" id="4932.YOR318C"/>
<dbReference type="PaxDb" id="4932-YOR318C"/>
<dbReference type="EnsemblFungi" id="YOR318C_mRNA">
    <property type="protein sequence ID" value="YOR318C"/>
    <property type="gene ID" value="YOR318C"/>
</dbReference>
<dbReference type="AGR" id="SGD:S000005845"/>
<dbReference type="SGD" id="S000005845">
    <property type="gene designation" value="YOR318C"/>
</dbReference>
<dbReference type="HOGENOM" id="CLU_180258_0_0_1"/>
<name>YO318_YEAST</name>
<feature type="chain" id="PRO_0000299736" description="Putative uncharacterized protein YOR318C">
    <location>
        <begin position="1"/>
        <end position="101"/>
    </location>
</feature>
<gene>
    <name type="ordered locus">YOR318C</name>
    <name type="ORF">06139</name>
</gene>
<sequence length="101" mass="11624">MCTPTTCLLADRDKSGEDRHAETNVLQGMDMLLELLLPVYARLNESGWLLWFVFHDVYEAVKMSTKESVHTRVINFPDILSTQQMRQGPSQIRTPLVMLLM</sequence>
<proteinExistence type="uncertain"/>
<reference key="1">
    <citation type="journal article" date="1996" name="Yeast">
        <title>Sequencing of a 35.71 kb DNA segment on the right arm of yeast chromosome XV reveals regions of similarity to chromosomes I and XIII.</title>
        <authorList>
            <person name="Pearson B.M."/>
            <person name="Hernando Y."/>
            <person name="Payne J."/>
            <person name="Wolf S.S."/>
            <person name="Kalogeropoulos A."/>
            <person name="Schweizer M."/>
        </authorList>
    </citation>
    <scope>NUCLEOTIDE SEQUENCE [GENOMIC DNA]</scope>
    <source>
        <strain>ATCC 96604 / S288c / FY1679</strain>
    </source>
</reference>
<reference key="2">
    <citation type="journal article" date="1997" name="Nature">
        <title>The nucleotide sequence of Saccharomyces cerevisiae chromosome XV.</title>
        <authorList>
            <person name="Dujon B."/>
            <person name="Albermann K."/>
            <person name="Aldea M."/>
            <person name="Alexandraki D."/>
            <person name="Ansorge W."/>
            <person name="Arino J."/>
            <person name="Benes V."/>
            <person name="Bohn C."/>
            <person name="Bolotin-Fukuhara M."/>
            <person name="Bordonne R."/>
            <person name="Boyer J."/>
            <person name="Camasses A."/>
            <person name="Casamayor A."/>
            <person name="Casas C."/>
            <person name="Cheret G."/>
            <person name="Cziepluch C."/>
            <person name="Daignan-Fornier B."/>
            <person name="Dang V.-D."/>
            <person name="de Haan M."/>
            <person name="Delius H."/>
            <person name="Durand P."/>
            <person name="Fairhead C."/>
            <person name="Feldmann H."/>
            <person name="Gaillon L."/>
            <person name="Galisson F."/>
            <person name="Gamo F.-J."/>
            <person name="Gancedo C."/>
            <person name="Goffeau A."/>
            <person name="Goulding S.E."/>
            <person name="Grivell L.A."/>
            <person name="Habbig B."/>
            <person name="Hand N.J."/>
            <person name="Hani J."/>
            <person name="Hattenhorst U."/>
            <person name="Hebling U."/>
            <person name="Hernando Y."/>
            <person name="Herrero E."/>
            <person name="Heumann K."/>
            <person name="Hiesel R."/>
            <person name="Hilger F."/>
            <person name="Hofmann B."/>
            <person name="Hollenberg C.P."/>
            <person name="Hughes B."/>
            <person name="Jauniaux J.-C."/>
            <person name="Kalogeropoulos A."/>
            <person name="Katsoulou C."/>
            <person name="Kordes E."/>
            <person name="Lafuente M.J."/>
            <person name="Landt O."/>
            <person name="Louis E.J."/>
            <person name="Maarse A.C."/>
            <person name="Madania A."/>
            <person name="Mannhaupt G."/>
            <person name="Marck C."/>
            <person name="Martin R.P."/>
            <person name="Mewes H.-W."/>
            <person name="Michaux G."/>
            <person name="Paces V."/>
            <person name="Parle-McDermott A.G."/>
            <person name="Pearson B.M."/>
            <person name="Perrin A."/>
            <person name="Pettersson B."/>
            <person name="Poch O."/>
            <person name="Pohl T.M."/>
            <person name="Poirey R."/>
            <person name="Portetelle D."/>
            <person name="Pujol A."/>
            <person name="Purnelle B."/>
            <person name="Ramezani Rad M."/>
            <person name="Rechmann S."/>
            <person name="Schwager C."/>
            <person name="Schweizer M."/>
            <person name="Sor F."/>
            <person name="Sterky F."/>
            <person name="Tarassov I.A."/>
            <person name="Teodoru C."/>
            <person name="Tettelin H."/>
            <person name="Thierry A."/>
            <person name="Tobiasch E."/>
            <person name="Tzermia M."/>
            <person name="Uhlen M."/>
            <person name="Unseld M."/>
            <person name="Valens M."/>
            <person name="Vandenbol M."/>
            <person name="Vetter I."/>
            <person name="Vlcek C."/>
            <person name="Voet M."/>
            <person name="Volckaert G."/>
            <person name="Voss H."/>
            <person name="Wambutt R."/>
            <person name="Wedler H."/>
            <person name="Wiemann S."/>
            <person name="Winsor B."/>
            <person name="Wolfe K.H."/>
            <person name="Zollner A."/>
            <person name="Zumstein E."/>
            <person name="Kleine K."/>
        </authorList>
    </citation>
    <scope>NUCLEOTIDE SEQUENCE [LARGE SCALE GENOMIC DNA]</scope>
    <source>
        <strain>ATCC 204508 / S288c</strain>
    </source>
</reference>
<reference key="3">
    <citation type="journal article" date="2014" name="G3 (Bethesda)">
        <title>The reference genome sequence of Saccharomyces cerevisiae: Then and now.</title>
        <authorList>
            <person name="Engel S.R."/>
            <person name="Dietrich F.S."/>
            <person name="Fisk D.G."/>
            <person name="Binkley G."/>
            <person name="Balakrishnan R."/>
            <person name="Costanzo M.C."/>
            <person name="Dwight S.S."/>
            <person name="Hitz B.C."/>
            <person name="Karra K."/>
            <person name="Nash R.S."/>
            <person name="Weng S."/>
            <person name="Wong E.D."/>
            <person name="Lloyd P."/>
            <person name="Skrzypek M.S."/>
            <person name="Miyasato S.R."/>
            <person name="Simison M."/>
            <person name="Cherry J.M."/>
        </authorList>
    </citation>
    <scope>GENOME REANNOTATION</scope>
    <source>
        <strain>ATCC 204508 / S288c</strain>
    </source>
</reference>
<protein>
    <recommendedName>
        <fullName>Putative uncharacterized protein YOR318C</fullName>
    </recommendedName>
</protein>
<accession>Q99318</accession>
<comment type="caution">
    <text evidence="1">Product of a dubious gene prediction unlikely to encode a functional protein. Because of that it is not part of the S.cerevisiae S288c complete/reference proteome set.</text>
</comment>